<evidence type="ECO:0000250" key="1"/>
<evidence type="ECO:0000305" key="2"/>
<organism>
    <name type="scientific">Staphylococcus aureus (strain MSSA476)</name>
    <dbReference type="NCBI Taxonomy" id="282459"/>
    <lineage>
        <taxon>Bacteria</taxon>
        <taxon>Bacillati</taxon>
        <taxon>Bacillota</taxon>
        <taxon>Bacilli</taxon>
        <taxon>Bacillales</taxon>
        <taxon>Staphylococcaceae</taxon>
        <taxon>Staphylococcus</taxon>
    </lineage>
</organism>
<feature type="initiator methionine" description="Removed" evidence="1">
    <location>
        <position position="1"/>
    </location>
</feature>
<feature type="chain" id="PRO_0000091218" description="Elongation factor G">
    <location>
        <begin position="2"/>
        <end position="693"/>
    </location>
</feature>
<feature type="domain" description="tr-type G">
    <location>
        <begin position="8"/>
        <end position="282"/>
    </location>
</feature>
<feature type="binding site" evidence="1">
    <location>
        <begin position="17"/>
        <end position="24"/>
    </location>
    <ligand>
        <name>GTP</name>
        <dbReference type="ChEBI" id="CHEBI:37565"/>
    </ligand>
</feature>
<feature type="binding site" evidence="1">
    <location>
        <begin position="81"/>
        <end position="85"/>
    </location>
    <ligand>
        <name>GTP</name>
        <dbReference type="ChEBI" id="CHEBI:37565"/>
    </ligand>
</feature>
<feature type="binding site" evidence="1">
    <location>
        <begin position="135"/>
        <end position="138"/>
    </location>
    <ligand>
        <name>GTP</name>
        <dbReference type="ChEBI" id="CHEBI:37565"/>
    </ligand>
</feature>
<name>EFG_STAAS</name>
<proteinExistence type="inferred from homology"/>
<sequence>MAREFSLEKTRNIGIMAHIDAGKTTTTERILYYTGRIHKIGETHEGASQMDWMEQEQDRGITITSAATTAAWEGHRVNIIDTPGHVDFTVEVERSLRVLDGAVTVLDAQSGVEPQTETVWRQATTYGVPRIVFVNKMDKLGANFEYSVSTLHDRLQANAAPIQLPIGAEDEFEAIIDLVEMKCFKYTNDLGTEIEEIEIPEDHLDRAEEARASLIEAVAETSDELMEKYLGDEEISVSELKEAIRQATTNVEFYPVLCGTAFKNKGVQLMLDAVIDYLPSPLDVKPIIGHRASNPEEEVIAKADDSAEFAALAFKVMTDPYVGKLTFFRVYSGTMTSGSYVKNSTKGKRERVGRLLQMHANSRQEIDTVYSGDIAAAVGLKDTGTGDTLCGEKNDIILESMEFPEPVIHLSVEPKSKADQDKMTQALVKLQEEDPTFHAHTDEETGQVIIGGMGELHLDILVDRMKKEFNVECNVGAPMVSYRETFKSSAQVQGKFSRQSGGRGQYGDVHIEFTPNETGAGFEFENAIVGGVVPREYIPSVEAGLKDAMENGVLAGYPLIDVKAKLYDGSYHDVDSSEMAFKIAASLALKEAAKKCDPVILEPMMKVTIEMPEEYMGDIMGDVTSRRGRVDGMEPRGNAQVVNAYVPLSEMFGYATSLRSNTQGRGTYTMYFDHYAEVPKSIAEDIIKKNKGE</sequence>
<reference key="1">
    <citation type="journal article" date="2004" name="Proc. Natl. Acad. Sci. U.S.A.">
        <title>Complete genomes of two clinical Staphylococcus aureus strains: evidence for the rapid evolution of virulence and drug resistance.</title>
        <authorList>
            <person name="Holden M.T.G."/>
            <person name="Feil E.J."/>
            <person name="Lindsay J.A."/>
            <person name="Peacock S.J."/>
            <person name="Day N.P.J."/>
            <person name="Enright M.C."/>
            <person name="Foster T.J."/>
            <person name="Moore C.E."/>
            <person name="Hurst L."/>
            <person name="Atkin R."/>
            <person name="Barron A."/>
            <person name="Bason N."/>
            <person name="Bentley S.D."/>
            <person name="Chillingworth C."/>
            <person name="Chillingworth T."/>
            <person name="Churcher C."/>
            <person name="Clark L."/>
            <person name="Corton C."/>
            <person name="Cronin A."/>
            <person name="Doggett J."/>
            <person name="Dowd L."/>
            <person name="Feltwell T."/>
            <person name="Hance Z."/>
            <person name="Harris B."/>
            <person name="Hauser H."/>
            <person name="Holroyd S."/>
            <person name="Jagels K."/>
            <person name="James K.D."/>
            <person name="Lennard N."/>
            <person name="Line A."/>
            <person name="Mayes R."/>
            <person name="Moule S."/>
            <person name="Mungall K."/>
            <person name="Ormond D."/>
            <person name="Quail M.A."/>
            <person name="Rabbinowitsch E."/>
            <person name="Rutherford K.M."/>
            <person name="Sanders M."/>
            <person name="Sharp S."/>
            <person name="Simmonds M."/>
            <person name="Stevens K."/>
            <person name="Whitehead S."/>
            <person name="Barrell B.G."/>
            <person name="Spratt B.G."/>
            <person name="Parkhill J."/>
        </authorList>
    </citation>
    <scope>NUCLEOTIDE SEQUENCE [LARGE SCALE GENOMIC DNA]</scope>
    <source>
        <strain>MSSA476</strain>
    </source>
</reference>
<gene>
    <name type="primary">fusA</name>
    <name type="synonym">fus</name>
    <name type="ordered locus">SAS0505</name>
</gene>
<accession>Q6GBU0</accession>
<dbReference type="EMBL" id="BX571857">
    <property type="protein sequence ID" value="CAG42280.1"/>
    <property type="molecule type" value="Genomic_DNA"/>
</dbReference>
<dbReference type="RefSeq" id="WP_000090315.1">
    <property type="nucleotide sequence ID" value="NC_002953.3"/>
</dbReference>
<dbReference type="SMR" id="Q6GBU0"/>
<dbReference type="KEGG" id="sas:SAS0505"/>
<dbReference type="HOGENOM" id="CLU_002794_4_1_9"/>
<dbReference type="GO" id="GO:0005737">
    <property type="term" value="C:cytoplasm"/>
    <property type="evidence" value="ECO:0007669"/>
    <property type="project" value="UniProtKB-SubCell"/>
</dbReference>
<dbReference type="GO" id="GO:0005525">
    <property type="term" value="F:GTP binding"/>
    <property type="evidence" value="ECO:0007669"/>
    <property type="project" value="UniProtKB-UniRule"/>
</dbReference>
<dbReference type="GO" id="GO:0003924">
    <property type="term" value="F:GTPase activity"/>
    <property type="evidence" value="ECO:0007669"/>
    <property type="project" value="InterPro"/>
</dbReference>
<dbReference type="GO" id="GO:0003746">
    <property type="term" value="F:translation elongation factor activity"/>
    <property type="evidence" value="ECO:0007669"/>
    <property type="project" value="UniProtKB-UniRule"/>
</dbReference>
<dbReference type="GO" id="GO:0032790">
    <property type="term" value="P:ribosome disassembly"/>
    <property type="evidence" value="ECO:0007669"/>
    <property type="project" value="TreeGrafter"/>
</dbReference>
<dbReference type="CDD" id="cd01886">
    <property type="entry name" value="EF-G"/>
    <property type="match status" value="1"/>
</dbReference>
<dbReference type="CDD" id="cd16262">
    <property type="entry name" value="EFG_III"/>
    <property type="match status" value="1"/>
</dbReference>
<dbReference type="CDD" id="cd01434">
    <property type="entry name" value="EFG_mtEFG1_IV"/>
    <property type="match status" value="1"/>
</dbReference>
<dbReference type="CDD" id="cd03713">
    <property type="entry name" value="EFG_mtEFG_C"/>
    <property type="match status" value="1"/>
</dbReference>
<dbReference type="CDD" id="cd04088">
    <property type="entry name" value="EFG_mtEFG_II"/>
    <property type="match status" value="1"/>
</dbReference>
<dbReference type="FunFam" id="2.40.30.10:FF:000006">
    <property type="entry name" value="Elongation factor G"/>
    <property type="match status" value="1"/>
</dbReference>
<dbReference type="FunFam" id="3.30.230.10:FF:000003">
    <property type="entry name" value="Elongation factor G"/>
    <property type="match status" value="1"/>
</dbReference>
<dbReference type="FunFam" id="3.30.70.240:FF:000001">
    <property type="entry name" value="Elongation factor G"/>
    <property type="match status" value="1"/>
</dbReference>
<dbReference type="FunFam" id="3.30.70.870:FF:000001">
    <property type="entry name" value="Elongation factor G"/>
    <property type="match status" value="1"/>
</dbReference>
<dbReference type="FunFam" id="3.40.50.300:FF:000029">
    <property type="entry name" value="Elongation factor G"/>
    <property type="match status" value="1"/>
</dbReference>
<dbReference type="Gene3D" id="3.30.230.10">
    <property type="match status" value="1"/>
</dbReference>
<dbReference type="Gene3D" id="3.30.70.240">
    <property type="match status" value="1"/>
</dbReference>
<dbReference type="Gene3D" id="3.30.70.870">
    <property type="entry name" value="Elongation Factor G (Translational Gtpase), domain 3"/>
    <property type="match status" value="1"/>
</dbReference>
<dbReference type="Gene3D" id="3.40.50.300">
    <property type="entry name" value="P-loop containing nucleotide triphosphate hydrolases"/>
    <property type="match status" value="1"/>
</dbReference>
<dbReference type="Gene3D" id="2.40.30.10">
    <property type="entry name" value="Translation factors"/>
    <property type="match status" value="1"/>
</dbReference>
<dbReference type="HAMAP" id="MF_00054_B">
    <property type="entry name" value="EF_G_EF_2_B"/>
    <property type="match status" value="1"/>
</dbReference>
<dbReference type="InterPro" id="IPR041095">
    <property type="entry name" value="EFG_II"/>
</dbReference>
<dbReference type="InterPro" id="IPR009022">
    <property type="entry name" value="EFG_III"/>
</dbReference>
<dbReference type="InterPro" id="IPR035647">
    <property type="entry name" value="EFG_III/V"/>
</dbReference>
<dbReference type="InterPro" id="IPR047872">
    <property type="entry name" value="EFG_IV"/>
</dbReference>
<dbReference type="InterPro" id="IPR035649">
    <property type="entry name" value="EFG_V"/>
</dbReference>
<dbReference type="InterPro" id="IPR000640">
    <property type="entry name" value="EFG_V-like"/>
</dbReference>
<dbReference type="InterPro" id="IPR004161">
    <property type="entry name" value="EFTu-like_2"/>
</dbReference>
<dbReference type="InterPro" id="IPR031157">
    <property type="entry name" value="G_TR_CS"/>
</dbReference>
<dbReference type="InterPro" id="IPR027417">
    <property type="entry name" value="P-loop_NTPase"/>
</dbReference>
<dbReference type="InterPro" id="IPR020568">
    <property type="entry name" value="Ribosomal_Su5_D2-typ_SF"/>
</dbReference>
<dbReference type="InterPro" id="IPR014721">
    <property type="entry name" value="Ribsml_uS5_D2-typ_fold_subgr"/>
</dbReference>
<dbReference type="InterPro" id="IPR005225">
    <property type="entry name" value="Small_GTP-bd"/>
</dbReference>
<dbReference type="InterPro" id="IPR000795">
    <property type="entry name" value="T_Tr_GTP-bd_dom"/>
</dbReference>
<dbReference type="InterPro" id="IPR009000">
    <property type="entry name" value="Transl_B-barrel_sf"/>
</dbReference>
<dbReference type="InterPro" id="IPR004540">
    <property type="entry name" value="Transl_elong_EFG/EF2"/>
</dbReference>
<dbReference type="InterPro" id="IPR005517">
    <property type="entry name" value="Transl_elong_EFG/EF2_IV"/>
</dbReference>
<dbReference type="NCBIfam" id="TIGR00484">
    <property type="entry name" value="EF-G"/>
    <property type="match status" value="1"/>
</dbReference>
<dbReference type="NCBIfam" id="NF009379">
    <property type="entry name" value="PRK12740.1-3"/>
    <property type="match status" value="1"/>
</dbReference>
<dbReference type="NCBIfam" id="NF009381">
    <property type="entry name" value="PRK12740.1-5"/>
    <property type="match status" value="1"/>
</dbReference>
<dbReference type="NCBIfam" id="TIGR00231">
    <property type="entry name" value="small_GTP"/>
    <property type="match status" value="1"/>
</dbReference>
<dbReference type="PANTHER" id="PTHR43261:SF1">
    <property type="entry name" value="RIBOSOME-RELEASING FACTOR 2, MITOCHONDRIAL"/>
    <property type="match status" value="1"/>
</dbReference>
<dbReference type="PANTHER" id="PTHR43261">
    <property type="entry name" value="TRANSLATION ELONGATION FACTOR G-RELATED"/>
    <property type="match status" value="1"/>
</dbReference>
<dbReference type="Pfam" id="PF00679">
    <property type="entry name" value="EFG_C"/>
    <property type="match status" value="1"/>
</dbReference>
<dbReference type="Pfam" id="PF14492">
    <property type="entry name" value="EFG_III"/>
    <property type="match status" value="1"/>
</dbReference>
<dbReference type="Pfam" id="PF03764">
    <property type="entry name" value="EFG_IV"/>
    <property type="match status" value="1"/>
</dbReference>
<dbReference type="Pfam" id="PF00009">
    <property type="entry name" value="GTP_EFTU"/>
    <property type="match status" value="1"/>
</dbReference>
<dbReference type="Pfam" id="PF03144">
    <property type="entry name" value="GTP_EFTU_D2"/>
    <property type="match status" value="1"/>
</dbReference>
<dbReference type="PRINTS" id="PR00315">
    <property type="entry name" value="ELONGATNFCT"/>
</dbReference>
<dbReference type="SMART" id="SM00838">
    <property type="entry name" value="EFG_C"/>
    <property type="match status" value="1"/>
</dbReference>
<dbReference type="SMART" id="SM00889">
    <property type="entry name" value="EFG_IV"/>
    <property type="match status" value="1"/>
</dbReference>
<dbReference type="SUPFAM" id="SSF54980">
    <property type="entry name" value="EF-G C-terminal domain-like"/>
    <property type="match status" value="2"/>
</dbReference>
<dbReference type="SUPFAM" id="SSF52540">
    <property type="entry name" value="P-loop containing nucleoside triphosphate hydrolases"/>
    <property type="match status" value="1"/>
</dbReference>
<dbReference type="SUPFAM" id="SSF54211">
    <property type="entry name" value="Ribosomal protein S5 domain 2-like"/>
    <property type="match status" value="1"/>
</dbReference>
<dbReference type="SUPFAM" id="SSF50447">
    <property type="entry name" value="Translation proteins"/>
    <property type="match status" value="1"/>
</dbReference>
<dbReference type="PROSITE" id="PS00301">
    <property type="entry name" value="G_TR_1"/>
    <property type="match status" value="1"/>
</dbReference>
<dbReference type="PROSITE" id="PS51722">
    <property type="entry name" value="G_TR_2"/>
    <property type="match status" value="1"/>
</dbReference>
<comment type="function">
    <text evidence="1">Catalyzes the GTP-dependent ribosomal translocation step during translation elongation. During this step, the ribosome changes from the pre-translocational (PRE) to the post-translocational (POST) state as the newly formed A-site-bound peptidyl-tRNA and P-site-bound deacylated tRNA move to the P and E sites, respectively. Catalyzes the coordinated movement of the two tRNA molecules, the mRNA and conformational changes in the ribosome (By similarity).</text>
</comment>
<comment type="subcellular location">
    <subcellularLocation>
        <location evidence="1">Cytoplasm</location>
    </subcellularLocation>
</comment>
<comment type="similarity">
    <text evidence="2">Belongs to the TRAFAC class translation factor GTPase superfamily. Classic translation factor GTPase family. EF-G/EF-2 subfamily.</text>
</comment>
<protein>
    <recommendedName>
        <fullName>Elongation factor G</fullName>
        <shortName>EF-G</shortName>
    </recommendedName>
</protein>
<keyword id="KW-0963">Cytoplasm</keyword>
<keyword id="KW-0251">Elongation factor</keyword>
<keyword id="KW-0342">GTP-binding</keyword>
<keyword id="KW-0547">Nucleotide-binding</keyword>
<keyword id="KW-0648">Protein biosynthesis</keyword>